<gene>
    <name type="ordered locus">Rv1954c</name>
    <name type="ORF">MTCY09F9.10</name>
</gene>
<keyword id="KW-1185">Reference proteome</keyword>
<organism>
    <name type="scientific">Mycobacterium tuberculosis (strain ATCC 25618 / H37Rv)</name>
    <dbReference type="NCBI Taxonomy" id="83332"/>
    <lineage>
        <taxon>Bacteria</taxon>
        <taxon>Bacillati</taxon>
        <taxon>Actinomycetota</taxon>
        <taxon>Actinomycetes</taxon>
        <taxon>Mycobacteriales</taxon>
        <taxon>Mycobacteriaceae</taxon>
        <taxon>Mycobacterium</taxon>
        <taxon>Mycobacterium tuberculosis complex</taxon>
    </lineage>
</organism>
<name>Y1954_MYCTU</name>
<sequence length="173" mass="18481">MAAGSGGGTVGLVLPRVASLSGLDGAPTVPEGSDKALMHLGDPPRRCDTHPDGTSSAAAALVLRRIDVHPLLTGLGRGRQTVSLRNGHLVATANRAILSRRRSRLTRGRSFTSHLITSCPRLDDHQHRHPTRCRAEHAGCTVATCIPNAHDPAPGHQTPRWGPFRLKPAYTRI</sequence>
<protein>
    <recommendedName>
        <fullName>Uncharacterized protein Rv1954c</fullName>
    </recommendedName>
</protein>
<feature type="chain" id="PRO_0000103915" description="Uncharacterized protein Rv1954c">
    <location>
        <begin position="1"/>
        <end position="173"/>
    </location>
</feature>
<evidence type="ECO:0000269" key="1">
    <source>
    </source>
</evidence>
<evidence type="ECO:0000305" key="2"/>
<dbReference type="EMBL" id="AL123456">
    <property type="protein sequence ID" value="CCP44721.1"/>
    <property type="molecule type" value="Genomic_DNA"/>
</dbReference>
<dbReference type="PIR" id="F70638">
    <property type="entry name" value="F70638"/>
</dbReference>
<dbReference type="RefSeq" id="NP_216470.1">
    <property type="nucleotide sequence ID" value="NC_000962.3"/>
</dbReference>
<dbReference type="RefSeq" id="WP_003904745.1">
    <property type="nucleotide sequence ID" value="NZ_NVQJ01000048.1"/>
</dbReference>
<dbReference type="STRING" id="83332.Rv1954c"/>
<dbReference type="PaxDb" id="83332-Rv1954c"/>
<dbReference type="DNASU" id="885967"/>
<dbReference type="GeneID" id="885967"/>
<dbReference type="KEGG" id="mtu:Rv1954c"/>
<dbReference type="KEGG" id="mtv:RVBD_1954c"/>
<dbReference type="TubercuList" id="Rv1954c"/>
<dbReference type="InParanoid" id="P9WLQ3"/>
<dbReference type="OrthoDB" id="3478924at2"/>
<dbReference type="Proteomes" id="UP000001584">
    <property type="component" value="Chromosome"/>
</dbReference>
<accession>P9WLQ3</accession>
<accession>L0T9R2</accession>
<accession>P95260</accession>
<reference key="1">
    <citation type="journal article" date="1998" name="Nature">
        <title>Deciphering the biology of Mycobacterium tuberculosis from the complete genome sequence.</title>
        <authorList>
            <person name="Cole S.T."/>
            <person name="Brosch R."/>
            <person name="Parkhill J."/>
            <person name="Garnier T."/>
            <person name="Churcher C.M."/>
            <person name="Harris D.E."/>
            <person name="Gordon S.V."/>
            <person name="Eiglmeier K."/>
            <person name="Gas S."/>
            <person name="Barry C.E. III"/>
            <person name="Tekaia F."/>
            <person name="Badcock K."/>
            <person name="Basham D."/>
            <person name="Brown D."/>
            <person name="Chillingworth T."/>
            <person name="Connor R."/>
            <person name="Davies R.M."/>
            <person name="Devlin K."/>
            <person name="Feltwell T."/>
            <person name="Gentles S."/>
            <person name="Hamlin N."/>
            <person name="Holroyd S."/>
            <person name="Hornsby T."/>
            <person name="Jagels K."/>
            <person name="Krogh A."/>
            <person name="McLean J."/>
            <person name="Moule S."/>
            <person name="Murphy L.D."/>
            <person name="Oliver S."/>
            <person name="Osborne J."/>
            <person name="Quail M.A."/>
            <person name="Rajandream M.A."/>
            <person name="Rogers J."/>
            <person name="Rutter S."/>
            <person name="Seeger K."/>
            <person name="Skelton S."/>
            <person name="Squares S."/>
            <person name="Squares R."/>
            <person name="Sulston J.E."/>
            <person name="Taylor K."/>
            <person name="Whitehead S."/>
            <person name="Barrell B.G."/>
        </authorList>
    </citation>
    <scope>NUCLEOTIDE SEQUENCE [LARGE SCALE GENOMIC DNA]</scope>
    <source>
        <strain>ATCC 25618 / H37Rv</strain>
    </source>
</reference>
<reference key="2">
    <citation type="journal article" date="2010" name="J. Bacteriol.">
        <title>Analyzing the regulatory role of the HigA antitoxin within Mycobacterium tuberculosis.</title>
        <authorList>
            <person name="Fivian-Hughes A.S."/>
            <person name="Davis E.O."/>
        </authorList>
    </citation>
    <scope>INDUCTION</scope>
    <source>
        <strain>ATCC 25618 / H37Rv</strain>
    </source>
</reference>
<comment type="induction">
    <text evidence="1">Present in mid-exponential phase cells.</text>
</comment>
<comment type="miscellaneous">
    <text>Gene Rv1954A is encoded entirely within Rv1954c (this gene), on the opposite strand.</text>
</comment>
<comment type="caution">
    <text evidence="2">It is uncertain whether Met-1 or Met-38 is the initiator. PCR experiments indicate the protein is probably shorter than indicated here, but the transcription start site was not precisely identified.</text>
</comment>
<proteinExistence type="evidence at transcript level"/>